<gene>
    <name evidence="1" type="primary">rpl16</name>
</gene>
<comment type="subunit">
    <text evidence="1">Part of the 50S ribosomal subunit.</text>
</comment>
<comment type="subcellular location">
    <subcellularLocation>
        <location>Plastid</location>
        <location>Chloroplast</location>
    </subcellularLocation>
</comment>
<comment type="similarity">
    <text evidence="1">Belongs to the universal ribosomal protein uL16 family.</text>
</comment>
<dbReference type="EMBL" id="AP009370">
    <property type="protein sequence ID" value="BAF50147.1"/>
    <property type="molecule type" value="Genomic_DNA"/>
</dbReference>
<dbReference type="RefSeq" id="YP_001123323.1">
    <property type="nucleotide sequence ID" value="NC_009269.1"/>
</dbReference>
<dbReference type="SMR" id="A4QKE2"/>
<dbReference type="GeneID" id="4961862"/>
<dbReference type="GO" id="GO:0009507">
    <property type="term" value="C:chloroplast"/>
    <property type="evidence" value="ECO:0007669"/>
    <property type="project" value="UniProtKB-SubCell"/>
</dbReference>
<dbReference type="GO" id="GO:0005762">
    <property type="term" value="C:mitochondrial large ribosomal subunit"/>
    <property type="evidence" value="ECO:0007669"/>
    <property type="project" value="TreeGrafter"/>
</dbReference>
<dbReference type="GO" id="GO:0019843">
    <property type="term" value="F:rRNA binding"/>
    <property type="evidence" value="ECO:0007669"/>
    <property type="project" value="InterPro"/>
</dbReference>
<dbReference type="GO" id="GO:0003735">
    <property type="term" value="F:structural constituent of ribosome"/>
    <property type="evidence" value="ECO:0007669"/>
    <property type="project" value="InterPro"/>
</dbReference>
<dbReference type="GO" id="GO:0032543">
    <property type="term" value="P:mitochondrial translation"/>
    <property type="evidence" value="ECO:0007669"/>
    <property type="project" value="TreeGrafter"/>
</dbReference>
<dbReference type="CDD" id="cd01433">
    <property type="entry name" value="Ribosomal_L16_L10e"/>
    <property type="match status" value="1"/>
</dbReference>
<dbReference type="FunFam" id="3.90.1170.10:FF:000001">
    <property type="entry name" value="50S ribosomal protein L16"/>
    <property type="match status" value="1"/>
</dbReference>
<dbReference type="Gene3D" id="3.90.1170.10">
    <property type="entry name" value="Ribosomal protein L10e/L16"/>
    <property type="match status" value="1"/>
</dbReference>
<dbReference type="HAMAP" id="MF_01342">
    <property type="entry name" value="Ribosomal_uL16"/>
    <property type="match status" value="1"/>
</dbReference>
<dbReference type="InterPro" id="IPR047873">
    <property type="entry name" value="Ribosomal_uL16"/>
</dbReference>
<dbReference type="InterPro" id="IPR000114">
    <property type="entry name" value="Ribosomal_uL16_bact-type"/>
</dbReference>
<dbReference type="InterPro" id="IPR020798">
    <property type="entry name" value="Ribosomal_uL16_CS"/>
</dbReference>
<dbReference type="InterPro" id="IPR016180">
    <property type="entry name" value="Ribosomal_uL16_dom"/>
</dbReference>
<dbReference type="InterPro" id="IPR036920">
    <property type="entry name" value="Ribosomal_uL16_sf"/>
</dbReference>
<dbReference type="NCBIfam" id="TIGR01164">
    <property type="entry name" value="rplP_bact"/>
    <property type="match status" value="1"/>
</dbReference>
<dbReference type="PANTHER" id="PTHR12220">
    <property type="entry name" value="50S/60S RIBOSOMAL PROTEIN L16"/>
    <property type="match status" value="1"/>
</dbReference>
<dbReference type="PANTHER" id="PTHR12220:SF13">
    <property type="entry name" value="LARGE RIBOSOMAL SUBUNIT PROTEIN UL16M"/>
    <property type="match status" value="1"/>
</dbReference>
<dbReference type="Pfam" id="PF00252">
    <property type="entry name" value="Ribosomal_L16"/>
    <property type="match status" value="1"/>
</dbReference>
<dbReference type="PRINTS" id="PR00060">
    <property type="entry name" value="RIBOSOMALL16"/>
</dbReference>
<dbReference type="SUPFAM" id="SSF54686">
    <property type="entry name" value="Ribosomal protein L16p/L10e"/>
    <property type="match status" value="1"/>
</dbReference>
<dbReference type="PROSITE" id="PS00586">
    <property type="entry name" value="RIBOSOMAL_L16_1"/>
    <property type="match status" value="1"/>
</dbReference>
<dbReference type="PROSITE" id="PS00701">
    <property type="entry name" value="RIBOSOMAL_L16_2"/>
    <property type="match status" value="1"/>
</dbReference>
<sequence length="135" mass="15294">MLSPKRTRFRKQHRGRLKGISSRGNRICFGRYALQTLEPAWITSRQIEAGRRAMTRNVRRGGKIWVRIFPDKPVTVRPAETRMGSGKGSPEYWVAVVKPGKILYEMGGVPENIARKAISIAASKMPIKTQFIISE</sequence>
<protein>
    <recommendedName>
        <fullName evidence="1">Large ribosomal subunit protein uL16c</fullName>
    </recommendedName>
    <alternativeName>
        <fullName evidence="2">50S ribosomal protein L16, chloroplastic</fullName>
    </alternativeName>
</protein>
<geneLocation type="chloroplast"/>
<feature type="chain" id="PRO_0000354616" description="Large ribosomal subunit protein uL16c">
    <location>
        <begin position="1"/>
        <end position="135"/>
    </location>
</feature>
<reference key="1">
    <citation type="submission" date="2007-03" db="EMBL/GenBank/DDBJ databases">
        <title>Sequencing analysis of Barbarea verna chloroplast DNA.</title>
        <authorList>
            <person name="Hosouchi T."/>
            <person name="Tsuruoka H."/>
            <person name="Kotani H."/>
        </authorList>
    </citation>
    <scope>NUCLEOTIDE SEQUENCE [LARGE SCALE GENOMIC DNA]</scope>
</reference>
<evidence type="ECO:0000255" key="1">
    <source>
        <dbReference type="HAMAP-Rule" id="MF_01342"/>
    </source>
</evidence>
<evidence type="ECO:0000305" key="2"/>
<proteinExistence type="inferred from homology"/>
<keyword id="KW-0150">Chloroplast</keyword>
<keyword id="KW-0934">Plastid</keyword>
<keyword id="KW-0687">Ribonucleoprotein</keyword>
<keyword id="KW-0689">Ribosomal protein</keyword>
<organism>
    <name type="scientific">Barbarea verna</name>
    <name type="common">Land cress</name>
    <name type="synonym">Erysimum vernum</name>
    <dbReference type="NCBI Taxonomy" id="50458"/>
    <lineage>
        <taxon>Eukaryota</taxon>
        <taxon>Viridiplantae</taxon>
        <taxon>Streptophyta</taxon>
        <taxon>Embryophyta</taxon>
        <taxon>Tracheophyta</taxon>
        <taxon>Spermatophyta</taxon>
        <taxon>Magnoliopsida</taxon>
        <taxon>eudicotyledons</taxon>
        <taxon>Gunneridae</taxon>
        <taxon>Pentapetalae</taxon>
        <taxon>rosids</taxon>
        <taxon>malvids</taxon>
        <taxon>Brassicales</taxon>
        <taxon>Brassicaceae</taxon>
        <taxon>Cardamineae</taxon>
        <taxon>Barbarea</taxon>
    </lineage>
</organism>
<accession>A4QKE2</accession>
<name>RK16_BARVE</name>